<proteinExistence type="evidence at protein level"/>
<organism>
    <name type="scientific">Serpula lacrymans var. lacrymans (strain S7.9)</name>
    <name type="common">Dry rot fungus</name>
    <dbReference type="NCBI Taxonomy" id="578457"/>
    <lineage>
        <taxon>Eukaryota</taxon>
        <taxon>Fungi</taxon>
        <taxon>Dikarya</taxon>
        <taxon>Basidiomycota</taxon>
        <taxon>Agaricomycotina</taxon>
        <taxon>Agaricomycetes</taxon>
        <taxon>Agaricomycetidae</taxon>
        <taxon>Boletales</taxon>
        <taxon>Coniophorineae</taxon>
        <taxon>Serpulaceae</taxon>
        <taxon>Serpula</taxon>
    </lineage>
</organism>
<keyword id="KW-0067">ATP-binding</keyword>
<keyword id="KW-0521">NADP</keyword>
<keyword id="KW-0547">Nucleotide-binding</keyword>
<keyword id="KW-0560">Oxidoreductase</keyword>
<keyword id="KW-0596">Phosphopantetheine</keyword>
<keyword id="KW-0597">Phosphoprotein</keyword>
<dbReference type="EC" id="1.2.1.-" evidence="4"/>
<dbReference type="EMBL" id="KX118591">
    <property type="protein sequence ID" value="ANX99775.1"/>
    <property type="molecule type" value="mRNA"/>
</dbReference>
<dbReference type="EMBL" id="GL945441">
    <property type="protein sequence ID" value="EGO20374.1"/>
    <property type="status" value="ALT_SEQ"/>
    <property type="molecule type" value="Genomic_DNA"/>
</dbReference>
<dbReference type="RefSeq" id="XP_007323119.1">
    <property type="nucleotide sequence ID" value="XM_007323057.1"/>
</dbReference>
<dbReference type="SMR" id="F8P9P5"/>
<dbReference type="GeneID" id="18816887"/>
<dbReference type="KEGG" id="sla:SERLADRAFT_453044"/>
<dbReference type="HOGENOM" id="CLU_002220_1_0_1"/>
<dbReference type="OrthoDB" id="429813at2759"/>
<dbReference type="Proteomes" id="UP000008064">
    <property type="component" value="Unassembled WGS sequence"/>
</dbReference>
<dbReference type="GO" id="GO:0005524">
    <property type="term" value="F:ATP binding"/>
    <property type="evidence" value="ECO:0007669"/>
    <property type="project" value="UniProtKB-KW"/>
</dbReference>
<dbReference type="GO" id="GO:0016491">
    <property type="term" value="F:oxidoreductase activity"/>
    <property type="evidence" value="ECO:0007669"/>
    <property type="project" value="UniProtKB-KW"/>
</dbReference>
<dbReference type="GO" id="GO:0031177">
    <property type="term" value="F:phosphopantetheine binding"/>
    <property type="evidence" value="ECO:0007669"/>
    <property type="project" value="InterPro"/>
</dbReference>
<dbReference type="GO" id="GO:0009058">
    <property type="term" value="P:biosynthetic process"/>
    <property type="evidence" value="ECO:0007669"/>
    <property type="project" value="UniProtKB-ARBA"/>
</dbReference>
<dbReference type="Gene3D" id="1.10.1200.10">
    <property type="entry name" value="ACP-like"/>
    <property type="match status" value="1"/>
</dbReference>
<dbReference type="Gene3D" id="3.40.50.12780">
    <property type="entry name" value="N-terminal domain of ligase-like"/>
    <property type="match status" value="1"/>
</dbReference>
<dbReference type="Gene3D" id="3.40.50.720">
    <property type="entry name" value="NAD(P)-binding Rossmann-like Domain"/>
    <property type="match status" value="1"/>
</dbReference>
<dbReference type="InterPro" id="IPR036736">
    <property type="entry name" value="ACP-like_sf"/>
</dbReference>
<dbReference type="InterPro" id="IPR051414">
    <property type="entry name" value="Adenylate-forming_Reductase"/>
</dbReference>
<dbReference type="InterPro" id="IPR020845">
    <property type="entry name" value="AMP-binding_CS"/>
</dbReference>
<dbReference type="InterPro" id="IPR000873">
    <property type="entry name" value="AMP-dep_synth/lig_dom"/>
</dbReference>
<dbReference type="InterPro" id="IPR042099">
    <property type="entry name" value="ANL_N_sf"/>
</dbReference>
<dbReference type="InterPro" id="IPR013120">
    <property type="entry name" value="Far_NAD-bd"/>
</dbReference>
<dbReference type="InterPro" id="IPR036291">
    <property type="entry name" value="NAD(P)-bd_dom_sf"/>
</dbReference>
<dbReference type="InterPro" id="IPR020806">
    <property type="entry name" value="PKS_PP-bd"/>
</dbReference>
<dbReference type="PANTHER" id="PTHR43439:SF2">
    <property type="entry name" value="ENZYME, PUTATIVE (JCVI)-RELATED"/>
    <property type="match status" value="1"/>
</dbReference>
<dbReference type="PANTHER" id="PTHR43439">
    <property type="entry name" value="PHENYLACETATE-COENZYME A LIGASE"/>
    <property type="match status" value="1"/>
</dbReference>
<dbReference type="Pfam" id="PF00501">
    <property type="entry name" value="AMP-binding"/>
    <property type="match status" value="1"/>
</dbReference>
<dbReference type="Pfam" id="PF23562">
    <property type="entry name" value="AMP-binding_C_3"/>
    <property type="match status" value="1"/>
</dbReference>
<dbReference type="Pfam" id="PF07993">
    <property type="entry name" value="NAD_binding_4"/>
    <property type="match status" value="1"/>
</dbReference>
<dbReference type="SMART" id="SM00823">
    <property type="entry name" value="PKS_PP"/>
    <property type="match status" value="1"/>
</dbReference>
<dbReference type="SUPFAM" id="SSF56801">
    <property type="entry name" value="Acetyl-CoA synthetase-like"/>
    <property type="match status" value="1"/>
</dbReference>
<dbReference type="SUPFAM" id="SSF51735">
    <property type="entry name" value="NAD(P)-binding Rossmann-fold domains"/>
    <property type="match status" value="1"/>
</dbReference>
<dbReference type="PROSITE" id="PS00455">
    <property type="entry name" value="AMP_BINDING"/>
    <property type="match status" value="1"/>
</dbReference>
<dbReference type="PROSITE" id="PS50075">
    <property type="entry name" value="CARRIER"/>
    <property type="match status" value="1"/>
</dbReference>
<evidence type="ECO:0000250" key="1">
    <source>
        <dbReference type="UniProtKB" id="Q6RKB1"/>
    </source>
</evidence>
<evidence type="ECO:0000255" key="2"/>
<evidence type="ECO:0000255" key="3">
    <source>
        <dbReference type="PROSITE-ProRule" id="PRU00258"/>
    </source>
</evidence>
<evidence type="ECO:0000269" key="4">
    <source>
    </source>
</evidence>
<evidence type="ECO:0000303" key="5">
    <source>
    </source>
</evidence>
<evidence type="ECO:0000305" key="6"/>
<evidence type="ECO:0000305" key="7">
    <source>
    </source>
</evidence>
<name>NPS11_SERL9</name>
<comment type="function">
    <text evidence="4">Adenylate-forming reductase, a natural product biosynthesis enzyme that resembles non-ribosomal peptide synthetases, yet serves to modify one substrate, rather than to condense two or more building blocks. The A-domain preferentially accepts benzoic acid as substrate. The natural product of the enzyme is not yet known.</text>
</comment>
<comment type="domain">
    <text evidence="7">Contains three distinct domains: an adenylation (A) domain that activates the substrate amino acid which is subsequently covalently linked as a thioester (aminoacyl-S-PCP) to the 4'-phosphopantetheine prosthetic group of the second domain, the peptidyl carrier protein (PCP) domain, as well as a reductase (R) domain of the short-chain dehydrogenase/reductase (SDR) type.</text>
</comment>
<comment type="similarity">
    <text evidence="6">Belongs to the adenylate-forming reductase family.</text>
</comment>
<comment type="sequence caution" evidence="6">
    <conflict type="erroneous gene model prediction">
        <sequence resource="EMBL-CDS" id="EGO20374"/>
    </conflict>
</comment>
<reference key="1">
    <citation type="journal article" date="2018" name="Fungal Genet. Biol.">
        <title>Multi-genome analysis identifies functional and phylogenetic diversity of basidiomycete adenylate-forming reductases.</title>
        <authorList>
            <person name="Brandenburger E."/>
            <person name="Braga D."/>
            <person name="Kombrink A."/>
            <person name="Lackner G."/>
            <person name="Gressler J."/>
            <person name="Kuenzler M."/>
            <person name="Hoffmeister D."/>
        </authorList>
    </citation>
    <scope>NUCLEOTIDE SEQUENCE [MRNA]</scope>
    <scope>FUNCTION</scope>
    <scope>CATALYTIC ACTIVITY</scope>
    <source>
        <strain>S7</strain>
    </source>
</reference>
<reference key="2">
    <citation type="journal article" date="2011" name="Science">
        <title>The plant cell wall-decomposing machinery underlies the functional diversity of forest fungi.</title>
        <authorList>
            <person name="Eastwood D.C."/>
            <person name="Floudas D."/>
            <person name="Binder M."/>
            <person name="Majcherczyk A."/>
            <person name="Schneider P."/>
            <person name="Aerts A."/>
            <person name="Asiegbu F.O."/>
            <person name="Baker S.E."/>
            <person name="Barry K."/>
            <person name="Bendiksby M."/>
            <person name="Blumentritt M."/>
            <person name="Coutinho P.M."/>
            <person name="Cullen D."/>
            <person name="de Vries R.P."/>
            <person name="Gathman A."/>
            <person name="Goodell B."/>
            <person name="Henrissat B."/>
            <person name="Ihrmark K."/>
            <person name="Kauserud H."/>
            <person name="Kohler A."/>
            <person name="LaButti K."/>
            <person name="Lapidus A."/>
            <person name="Lavin J.L."/>
            <person name="Lee Y.-H."/>
            <person name="Lindquist E."/>
            <person name="Lilly W."/>
            <person name="Lucas S."/>
            <person name="Morin E."/>
            <person name="Murat C."/>
            <person name="Oguiza J.A."/>
            <person name="Park J."/>
            <person name="Pisabarro A.G."/>
            <person name="Riley R."/>
            <person name="Rosling A."/>
            <person name="Salamov A."/>
            <person name="Schmidt O."/>
            <person name="Schmutz J."/>
            <person name="Skrede I."/>
            <person name="Stenlid J."/>
            <person name="Wiebenga A."/>
            <person name="Xie X."/>
            <person name="Kuees U."/>
            <person name="Hibbett D.S."/>
            <person name="Hoffmeister D."/>
            <person name="Hoegberg N."/>
            <person name="Martin F."/>
            <person name="Grigoriev I.V."/>
            <person name="Watkinson S.C."/>
        </authorList>
    </citation>
    <scope>NUCLEOTIDE SEQUENCE [LARGE SCALE GENOMIC DNA]</scope>
    <source>
        <strain>S7.9</strain>
    </source>
</reference>
<feature type="chain" id="PRO_5003376645" description="Adenylate-forming reductase Nps11">
    <location>
        <begin position="1"/>
        <end position="1099"/>
    </location>
</feature>
<feature type="domain" description="Carrier" evidence="3">
    <location>
        <begin position="578"/>
        <end position="664"/>
    </location>
</feature>
<feature type="region of interest" description="Adenylation (A) domain" evidence="2">
    <location>
        <begin position="29"/>
        <end position="360"/>
    </location>
</feature>
<feature type="region of interest" description="Reductase (R) domain" evidence="2">
    <location>
        <begin position="717"/>
        <end position="952"/>
    </location>
</feature>
<feature type="binding site" evidence="1">
    <location>
        <position position="244"/>
    </location>
    <ligand>
        <name>AMP</name>
        <dbReference type="ChEBI" id="CHEBI:456215"/>
    </ligand>
</feature>
<feature type="binding site" evidence="1">
    <location>
        <begin position="347"/>
        <end position="348"/>
    </location>
    <ligand>
        <name>AMP</name>
        <dbReference type="ChEBI" id="CHEBI:456215"/>
    </ligand>
</feature>
<feature type="binding site" evidence="1">
    <location>
        <position position="352"/>
    </location>
    <ligand>
        <name>AMP</name>
        <dbReference type="ChEBI" id="CHEBI:456215"/>
    </ligand>
</feature>
<feature type="binding site" evidence="1">
    <location>
        <begin position="432"/>
        <end position="435"/>
    </location>
    <ligand>
        <name>AMP</name>
        <dbReference type="ChEBI" id="CHEBI:456215"/>
    </ligand>
</feature>
<feature type="binding site" evidence="1">
    <location>
        <begin position="721"/>
        <end position="724"/>
    </location>
    <ligand>
        <name>NADP(+)</name>
        <dbReference type="ChEBI" id="CHEBI:58349"/>
    </ligand>
</feature>
<feature type="binding site" evidence="1">
    <location>
        <begin position="809"/>
        <end position="811"/>
    </location>
    <ligand>
        <name>NADP(+)</name>
        <dbReference type="ChEBI" id="CHEBI:58349"/>
    </ligand>
</feature>
<feature type="binding site" evidence="1">
    <location>
        <position position="883"/>
    </location>
    <ligand>
        <name>NADP(+)</name>
        <dbReference type="ChEBI" id="CHEBI:58349"/>
    </ligand>
</feature>
<feature type="binding site" evidence="1">
    <location>
        <position position="887"/>
    </location>
    <ligand>
        <name>NADP(+)</name>
        <dbReference type="ChEBI" id="CHEBI:58349"/>
    </ligand>
</feature>
<feature type="modified residue" description="O-(pantetheine 4'-phosphoryl)serine" evidence="3">
    <location>
        <position position="613"/>
    </location>
</feature>
<accession>F8P9P5</accession>
<accession>A0A1B1ZGC2</accession>
<gene>
    <name evidence="5" type="primary">nps11</name>
    <name type="ORF">SERLADRAFT_453044</name>
</gene>
<protein>
    <recommendedName>
        <fullName evidence="5">Adenylate-forming reductase Nps11</fullName>
        <ecNumber evidence="4">1.2.1.-</ecNumber>
    </recommendedName>
    <alternativeName>
        <fullName evidence="5">Benzoic acid reductase</fullName>
    </alternativeName>
    <alternativeName>
        <fullName evidence="5">Nonribosomal peptide synthase-like enzyme 11</fullName>
        <shortName evidence="5">NRPS-like</shortName>
    </alternativeName>
</protein>
<sequence>MADPSFSYTLHYPPVDGSLLFPEIIAFNAEHNSNVPFFVFPEDGSANGVVSISHLEFYRACHRVAHALRPNRAGPDGEIIAIIAMTDTIQYFALLVGVIIAGYIPFPMSPRNSAAAVSNLLLKTSCHRLITTQHSLQPLLDGIKSELGSFNFSFQDVPCLAHIYPKLGLETIDDPFEPFPARPSRPSASEVMMYLHSSGSTGFPKAIPQTHQTVIHWCAAAPVVDTKLYPADTCLGVMLLPSFHTLGIICSLYLPLITLRSVSVYAPTSYNDPKAIPVIPTSENILEGVQRTNCNALMAVPAFIELWALSPSAIEILKSLRFLASSGGPLSEKVGNALASVGVPLVNVYGGTECGGLNSMFRRKDEVCDWVWINLSPRVMFRWVPQGEGLYECQILQSEMHRVSVENLPDVKGYATSDIFLKHPTKEGLWKLVGRKDDIIVLSSGEKTVPAPMENTIASNPVVGGTVMFGRARNHVGILIEPRQGFDVNIDDPKQVAAFRNRIWPEVEEANKAAAAFSRIFKEMILITRPDKPLPRTGKGTVMRKAAVTIYDKEIDALYDTVEASTTVNKDVELPKDWSEESLVVWLGEHAARVNSDKKVDPEVDVFEQGFDSLTATFLRNRIIGSLSSSTDSNVRTTARQIDQNIVFSNPTIKRLSQALARVVSNPQFTGKEGSLINRKVELENTLAMYSEGLPGTLSPQVEQPNGDGHSCHVVLLTGSTGGLGSYLLASLLENEQVSLVYAFNRSSKDGKSSEERQKAGFEDRGLDIALLSSPKLRYIEGDAAQDKLGLGDATYDKLRTSINVIIHNAWRLDFSLSLSSFGSNIKGTRNLVDLALSSPNAPSLRFLFTSSISSAQGWDKSKGACPEEVLFDANVASGGSGYGASKYVCERILEKSGLQASSFRIGQISGGQPRGAWSVTDWFPMLVKSSLALGALPVAKGVVSWLPPHAVSQAILDVAFAKAKPPPVINLVHPRPVQWAALMQSIGDALVHNNLLTKPLPIVAFEEWFSRLEQKAIGASADDFKEMPALKLLPFMRMIAQSDKSIRKVTSDGEAGGFVVFSTTKAQQLSRTMRELAPITAEDVALWMKYWASKGMFM</sequence>